<proteinExistence type="evidence at protein level"/>
<evidence type="ECO:0000255" key="1">
    <source>
        <dbReference type="PROSITE-ProRule" id="PRU00042"/>
    </source>
</evidence>
<evidence type="ECO:0000255" key="2">
    <source>
        <dbReference type="PROSITE-ProRule" id="PRU00119"/>
    </source>
</evidence>
<evidence type="ECO:0000305" key="3"/>
<evidence type="ECO:0007744" key="4">
    <source>
    </source>
</evidence>
<evidence type="ECO:0007744" key="5">
    <source>
    </source>
</evidence>
<feature type="chain" id="PRO_0000286810" description="Zinc finger protein 552">
    <location>
        <begin position="1"/>
        <end position="407"/>
    </location>
</feature>
<feature type="domain" description="KRAB" evidence="2">
    <location>
        <begin position="14"/>
        <end position="90"/>
    </location>
</feature>
<feature type="zinc finger region" description="C2H2-type 1" evidence="1">
    <location>
        <begin position="91"/>
        <end position="113"/>
    </location>
</feature>
<feature type="zinc finger region" description="C2H2-type 2; degenerate" evidence="1">
    <location>
        <begin position="119"/>
        <end position="141"/>
    </location>
</feature>
<feature type="zinc finger region" description="C2H2-type 3; degenerate" evidence="1">
    <location>
        <begin position="212"/>
        <end position="234"/>
    </location>
</feature>
<feature type="zinc finger region" description="C2H2-type 4; degenerate" evidence="1">
    <location>
        <begin position="244"/>
        <end position="262"/>
    </location>
</feature>
<feature type="zinc finger region" description="C2H2-type 5" evidence="1">
    <location>
        <begin position="268"/>
        <end position="290"/>
    </location>
</feature>
<feature type="zinc finger region" description="C2H2-type 6" evidence="1">
    <location>
        <begin position="296"/>
        <end position="318"/>
    </location>
</feature>
<feature type="zinc finger region" description="C2H2-type 7" evidence="1">
    <location>
        <begin position="324"/>
        <end position="346"/>
    </location>
</feature>
<feature type="zinc finger region" description="C2H2-type 8" evidence="1">
    <location>
        <begin position="352"/>
        <end position="374"/>
    </location>
</feature>
<feature type="zinc finger region" description="C2H2-type 9" evidence="1">
    <location>
        <begin position="380"/>
        <end position="402"/>
    </location>
</feature>
<feature type="cross-link" description="Glycyl lysine isopeptide (Lys-Gly) (interchain with G-Cter in SUMO2)" evidence="5">
    <location>
        <position position="176"/>
    </location>
</feature>
<feature type="cross-link" description="Glycyl lysine isopeptide (Lys-Gly) (interchain with G-Cter in SUMO2)" evidence="4 5">
    <location>
        <position position="198"/>
    </location>
</feature>
<feature type="cross-link" description="Glycyl lysine isopeptide (Lys-Gly) (interchain with G-Cter in SUMO2)" evidence="4">
    <location>
        <position position="251"/>
    </location>
</feature>
<feature type="cross-link" description="Glycyl lysine isopeptide (Lys-Gly) (interchain with G-Cter in SUMO2)" evidence="4">
    <location>
        <position position="266"/>
    </location>
</feature>
<feature type="cross-link" description="Glycyl lysine isopeptide (Lys-Gly) (interchain with G-Cter in SUMO2)" evidence="5">
    <location>
        <position position="308"/>
    </location>
</feature>
<feature type="sequence variant" id="VAR_032177" description="In dbSNP:rs2288538.">
    <original>W</original>
    <variation>C</variation>
    <location>
        <position position="242"/>
    </location>
</feature>
<feature type="sequence conflict" description="In Ref. 3; BAB15093." evidence="3" ref="3">
    <original>H</original>
    <variation>R</variation>
    <location>
        <position position="286"/>
    </location>
</feature>
<gene>
    <name type="primary">ZNF552</name>
</gene>
<comment type="function">
    <text>May be involved in transcriptional regulation.</text>
</comment>
<comment type="interaction">
    <interactant intactId="EBI-2555731">
        <id>Q9H707</id>
    </interactant>
    <interactant intactId="EBI-17183751">
        <id>X5D778</id>
        <label>ANKRD11</label>
    </interactant>
    <organismsDiffer>false</organismsDiffer>
    <experiments>3</experiments>
</comment>
<comment type="interaction">
    <interactant intactId="EBI-2555731">
        <id>Q9H707</id>
    </interactant>
    <interactant intactId="EBI-541426">
        <id>Q9BXS5</id>
        <label>AP1M1</label>
    </interactant>
    <organismsDiffer>false</organismsDiffer>
    <experiments>3</experiments>
</comment>
<comment type="interaction">
    <interactant intactId="EBI-2555731">
        <id>Q9H707</id>
    </interactant>
    <interactant intactId="EBI-3866279">
        <id>Q9BWT7</id>
        <label>CARD10</label>
    </interactant>
    <organismsDiffer>false</organismsDiffer>
    <experiments>3</experiments>
</comment>
<comment type="interaction">
    <interactant intactId="EBI-2555731">
        <id>Q9H707</id>
    </interactant>
    <interactant intactId="EBI-11977221">
        <id>Q86Z20</id>
        <label>CCDC125</label>
    </interactant>
    <organismsDiffer>false</organismsDiffer>
    <experiments>3</experiments>
</comment>
<comment type="interaction">
    <interactant intactId="EBI-2555731">
        <id>Q9H707</id>
    </interactant>
    <interactant intactId="EBI-10961624">
        <id>Q2TAC2-2</id>
        <label>CCDC57</label>
    </interactant>
    <organismsDiffer>false</organismsDiffer>
    <experiments>3</experiments>
</comment>
<comment type="interaction">
    <interactant intactId="EBI-2555731">
        <id>Q9H707</id>
    </interactant>
    <interactant intactId="EBI-748961">
        <id>O95273</id>
        <label>CCNDBP1</label>
    </interactant>
    <organismsDiffer>false</organismsDiffer>
    <experiments>3</experiments>
</comment>
<comment type="interaction">
    <interactant intactId="EBI-2555731">
        <id>Q9H707</id>
    </interactant>
    <interactant intactId="EBI-10292696">
        <id>Q96Q77</id>
        <label>CIB3</label>
    </interactant>
    <organismsDiffer>false</organismsDiffer>
    <experiments>3</experiments>
</comment>
<comment type="interaction">
    <interactant intactId="EBI-2555731">
        <id>Q9H707</id>
    </interactant>
    <interactant intactId="EBI-11962928">
        <id>Q9UI47-2</id>
        <label>CTNNA3</label>
    </interactant>
    <organismsDiffer>false</organismsDiffer>
    <experiments>3</experiments>
</comment>
<comment type="interaction">
    <interactant intactId="EBI-2555731">
        <id>Q9H707</id>
    </interactant>
    <interactant intactId="EBI-3867333">
        <id>A8MQ03</id>
        <label>CYSRT1</label>
    </interactant>
    <organismsDiffer>false</organismsDiffer>
    <experiments>3</experiments>
</comment>
<comment type="interaction">
    <interactant intactId="EBI-2555731">
        <id>Q9H707</id>
    </interactant>
    <interactant intactId="EBI-739789">
        <id>Q92997</id>
        <label>DVL3</label>
    </interactant>
    <organismsDiffer>false</organismsDiffer>
    <experiments>3</experiments>
</comment>
<comment type="interaction">
    <interactant intactId="EBI-2555731">
        <id>Q9H707</id>
    </interactant>
    <interactant intactId="EBI-725515">
        <id>O43559</id>
        <label>FRS3</label>
    </interactant>
    <organismsDiffer>false</organismsDiffer>
    <experiments>3</experiments>
</comment>
<comment type="interaction">
    <interactant intactId="EBI-2555731">
        <id>Q9H707</id>
    </interactant>
    <interactant intactId="EBI-744104">
        <id>P55040</id>
        <label>GEM</label>
    </interactant>
    <organismsDiffer>false</organismsDiffer>
    <experiments>3</experiments>
</comment>
<comment type="interaction">
    <interactant intactId="EBI-2555731">
        <id>Q9H707</id>
    </interactant>
    <interactant intactId="EBI-5916454">
        <id>A6NEM1</id>
        <label>GOLGA6L9</label>
    </interactant>
    <organismsDiffer>false</organismsDiffer>
    <experiments>3</experiments>
</comment>
<comment type="interaction">
    <interactant intactId="EBI-2555731">
        <id>Q9H707</id>
    </interactant>
    <interactant intactId="EBI-740553">
        <id>P13807</id>
        <label>GYS1</label>
    </interactant>
    <organismsDiffer>false</organismsDiffer>
    <experiments>3</experiments>
</comment>
<comment type="interaction">
    <interactant intactId="EBI-2555731">
        <id>Q9H707</id>
    </interactant>
    <interactant intactId="EBI-3893317">
        <id>P09067</id>
        <label>HOXB5</label>
    </interactant>
    <organismsDiffer>false</organismsDiffer>
    <experiments>3</experiments>
</comment>
<comment type="interaction">
    <interactant intactId="EBI-2555731">
        <id>Q9H707</id>
    </interactant>
    <interactant intactId="EBI-715611">
        <id>Q9C086</id>
        <label>INO80B</label>
    </interactant>
    <organismsDiffer>false</organismsDiffer>
    <experiments>3</experiments>
</comment>
<comment type="interaction">
    <interactant intactId="EBI-2555731">
        <id>Q9H707</id>
    </interactant>
    <interactant intactId="EBI-11954971">
        <id>Q96MP8-2</id>
        <label>KCTD7</label>
    </interactant>
    <organismsDiffer>false</organismsDiffer>
    <experiments>3</experiments>
</comment>
<comment type="interaction">
    <interactant intactId="EBI-2555731">
        <id>Q9H707</id>
    </interactant>
    <interactant intactId="EBI-10302392">
        <id>Q9BYQ6</id>
        <label>KRTAP4-11</label>
    </interactant>
    <organismsDiffer>false</organismsDiffer>
    <experiments>6</experiments>
</comment>
<comment type="interaction">
    <interactant intactId="EBI-2555731">
        <id>Q9H707</id>
    </interactant>
    <interactant intactId="EBI-11993254">
        <id>Q9BYR2</id>
        <label>KRTAP4-5</label>
    </interactant>
    <organismsDiffer>false</organismsDiffer>
    <experiments>6</experiments>
</comment>
<comment type="interaction">
    <interactant intactId="EBI-2555731">
        <id>Q9H707</id>
    </interactant>
    <interactant intactId="EBI-739832">
        <id>Q8TBB1</id>
        <label>LNX1</label>
    </interactant>
    <organismsDiffer>false</organismsDiffer>
    <experiments>3</experiments>
</comment>
<comment type="interaction">
    <interactant intactId="EBI-2555731">
        <id>Q9H707</id>
    </interactant>
    <interactant intactId="EBI-10172526">
        <id>Q9UJV3-2</id>
        <label>MID2</label>
    </interactant>
    <organismsDiffer>false</organismsDiffer>
    <experiments>3</experiments>
</comment>
<comment type="interaction">
    <interactant intactId="EBI-2555731">
        <id>Q9H707</id>
    </interactant>
    <interactant intactId="EBI-17717171">
        <id>Q9UPV7</id>
        <label>PHF24</label>
    </interactant>
    <organismsDiffer>false</organismsDiffer>
    <experiments>3</experiments>
</comment>
<comment type="interaction">
    <interactant intactId="EBI-2555731">
        <id>Q9H707</id>
    </interactant>
    <interactant intactId="EBI-748391">
        <id>Q9BWG6</id>
        <label>SCNM1</label>
    </interactant>
    <organismsDiffer>false</organismsDiffer>
    <experiments>3</experiments>
</comment>
<comment type="interaction">
    <interactant intactId="EBI-2555731">
        <id>Q9H707</id>
    </interactant>
    <interactant intactId="EBI-750487">
        <id>Q8WW24</id>
        <label>TEKT4</label>
    </interactant>
    <organismsDiffer>false</organismsDiffer>
    <experiments>3</experiments>
</comment>
<comment type="interaction">
    <interactant intactId="EBI-2555731">
        <id>Q9H707</id>
    </interactant>
    <interactant intactId="EBI-11952721">
        <id>Q05BL1</id>
        <label>TP53BP2</label>
    </interactant>
    <organismsDiffer>false</organismsDiffer>
    <experiments>3</experiments>
</comment>
<comment type="interaction">
    <interactant intactId="EBI-2555731">
        <id>Q9H707</id>
    </interactant>
    <interactant intactId="EBI-725997">
        <id>Q8WV44</id>
        <label>TRIM41</label>
    </interactant>
    <organismsDiffer>false</organismsDiffer>
    <experiments>3</experiments>
</comment>
<comment type="interaction">
    <interactant intactId="EBI-2555731">
        <id>Q9H707</id>
    </interactant>
    <interactant intactId="EBI-711925">
        <id>Q05516</id>
        <label>ZBTB16</label>
    </interactant>
    <organismsDiffer>false</organismsDiffer>
    <experiments>3</experiments>
</comment>
<comment type="interaction">
    <interactant intactId="EBI-2555731">
        <id>Q9H707</id>
    </interactant>
    <interactant intactId="EBI-11985915">
        <id>Q5T619</id>
        <label>ZNF648</label>
    </interactant>
    <organismsDiffer>false</organismsDiffer>
    <experiments>3</experiments>
</comment>
<comment type="interaction">
    <interactant intactId="EBI-2555731">
        <id>Q9H707</id>
    </interactant>
    <interactant intactId="EBI-625509">
        <id>Q8N720</id>
        <label>ZNF655</label>
    </interactant>
    <organismsDiffer>false</organismsDiffer>
    <experiments>3</experiments>
</comment>
<comment type="interaction">
    <interactant intactId="EBI-2555731">
        <id>Q9H707</id>
    </interactant>
    <interactant intactId="EBI-10240849">
        <id>Q3KQV3</id>
        <label>ZNF792</label>
    </interactant>
    <organismsDiffer>false</organismsDiffer>
    <experiments>3</experiments>
</comment>
<comment type="interaction">
    <interactant intactId="EBI-2555731">
        <id>Q9H707</id>
    </interactant>
    <interactant intactId="EBI-5667516">
        <id>Q9Y2P0</id>
        <label>ZNF835</label>
    </interactant>
    <organismsDiffer>false</organismsDiffer>
    <experiments>3</experiments>
</comment>
<comment type="interaction">
    <interactant intactId="EBI-2555731">
        <id>Q9H707</id>
    </interactant>
    <interactant intactId="EBI-11962574">
        <id>Q96EG3</id>
        <label>ZNF837</label>
    </interactant>
    <organismsDiffer>false</organismsDiffer>
    <experiments>6</experiments>
</comment>
<comment type="interaction">
    <interactant intactId="EBI-2555731">
        <id>Q9H707</id>
    </interactant>
    <interactant intactId="EBI-527853">
        <id>Q9UGI0</id>
        <label>ZRANB1</label>
    </interactant>
    <organismsDiffer>false</organismsDiffer>
    <experiments>3</experiments>
</comment>
<comment type="subcellular location">
    <subcellularLocation>
        <location evidence="3">Nucleus</location>
    </subcellularLocation>
</comment>
<comment type="similarity">
    <text evidence="3">Belongs to the krueppel C2H2-type zinc-finger protein family.</text>
</comment>
<comment type="sequence caution" evidence="3">
    <conflict type="frameshift">
        <sequence resource="EMBL-CDS" id="BAB15093"/>
    </conflict>
</comment>
<accession>Q9H707</accession>
<accession>B3KUE9</accession>
<accession>Q6P5A6</accession>
<name>ZN552_HUMAN</name>
<sequence>MAAAALRFPVQGTVTFEDVAVKFTQEEWNLLSEAQRCLYRDVTLENLALMSSLGCWCGVEDEAAPSKQSIYIQRETQVRTPMAGVSPKKAHPCEMCGPILGDILHVADHQGTHHKQKLHRCEAWGNKLYDSGNFHQHQNEHIGEKPYRGSVEEALFAKRCKLHVSGESSVFSESGKDFLLRSGLLQQEATHTGKSNSKTECVSLFHGGKSHYSCGGCMKHFSTKDILSQHERLLPTEEPSVWCECGKSSSKYDSFSNHQGVHTREKPYTCGICGKLFNSKSHLLVHQRIHTGEKPYECEVCQKFFRHKYHLIAHQRVHTGERPYECSDCGKSFTHSSTFRVHKRVHTGQKPYECSECGKSFAESSSLTKHRRVHTGEKPYGCSECEKKFRQISSLRHHQRVHKRKGL</sequence>
<organism>
    <name type="scientific">Homo sapiens</name>
    <name type="common">Human</name>
    <dbReference type="NCBI Taxonomy" id="9606"/>
    <lineage>
        <taxon>Eukaryota</taxon>
        <taxon>Metazoa</taxon>
        <taxon>Chordata</taxon>
        <taxon>Craniata</taxon>
        <taxon>Vertebrata</taxon>
        <taxon>Euteleostomi</taxon>
        <taxon>Mammalia</taxon>
        <taxon>Eutheria</taxon>
        <taxon>Euarchontoglires</taxon>
        <taxon>Primates</taxon>
        <taxon>Haplorrhini</taxon>
        <taxon>Catarrhini</taxon>
        <taxon>Hominidae</taxon>
        <taxon>Homo</taxon>
    </lineage>
</organism>
<reference key="1">
    <citation type="journal article" date="2004" name="Nature">
        <title>The DNA sequence and biology of human chromosome 19.</title>
        <authorList>
            <person name="Grimwood J."/>
            <person name="Gordon L.A."/>
            <person name="Olsen A.S."/>
            <person name="Terry A."/>
            <person name="Schmutz J."/>
            <person name="Lamerdin J.E."/>
            <person name="Hellsten U."/>
            <person name="Goodstein D."/>
            <person name="Couronne O."/>
            <person name="Tran-Gyamfi M."/>
            <person name="Aerts A."/>
            <person name="Altherr M."/>
            <person name="Ashworth L."/>
            <person name="Bajorek E."/>
            <person name="Black S."/>
            <person name="Branscomb E."/>
            <person name="Caenepeel S."/>
            <person name="Carrano A.V."/>
            <person name="Caoile C."/>
            <person name="Chan Y.M."/>
            <person name="Christensen M."/>
            <person name="Cleland C.A."/>
            <person name="Copeland A."/>
            <person name="Dalin E."/>
            <person name="Dehal P."/>
            <person name="Denys M."/>
            <person name="Detter J.C."/>
            <person name="Escobar J."/>
            <person name="Flowers D."/>
            <person name="Fotopulos D."/>
            <person name="Garcia C."/>
            <person name="Georgescu A.M."/>
            <person name="Glavina T."/>
            <person name="Gomez M."/>
            <person name="Gonzales E."/>
            <person name="Groza M."/>
            <person name="Hammon N."/>
            <person name="Hawkins T."/>
            <person name="Haydu L."/>
            <person name="Ho I."/>
            <person name="Huang W."/>
            <person name="Israni S."/>
            <person name="Jett J."/>
            <person name="Kadner K."/>
            <person name="Kimball H."/>
            <person name="Kobayashi A."/>
            <person name="Larionov V."/>
            <person name="Leem S.-H."/>
            <person name="Lopez F."/>
            <person name="Lou Y."/>
            <person name="Lowry S."/>
            <person name="Malfatti S."/>
            <person name="Martinez D."/>
            <person name="McCready P.M."/>
            <person name="Medina C."/>
            <person name="Morgan J."/>
            <person name="Nelson K."/>
            <person name="Nolan M."/>
            <person name="Ovcharenko I."/>
            <person name="Pitluck S."/>
            <person name="Pollard M."/>
            <person name="Popkie A.P."/>
            <person name="Predki P."/>
            <person name="Quan G."/>
            <person name="Ramirez L."/>
            <person name="Rash S."/>
            <person name="Retterer J."/>
            <person name="Rodriguez A."/>
            <person name="Rogers S."/>
            <person name="Salamov A."/>
            <person name="Salazar A."/>
            <person name="She X."/>
            <person name="Smith D."/>
            <person name="Slezak T."/>
            <person name="Solovyev V."/>
            <person name="Thayer N."/>
            <person name="Tice H."/>
            <person name="Tsai M."/>
            <person name="Ustaszewska A."/>
            <person name="Vo N."/>
            <person name="Wagner M."/>
            <person name="Wheeler J."/>
            <person name="Wu K."/>
            <person name="Xie G."/>
            <person name="Yang J."/>
            <person name="Dubchak I."/>
            <person name="Furey T.S."/>
            <person name="DeJong P."/>
            <person name="Dickson M."/>
            <person name="Gordon D."/>
            <person name="Eichler E.E."/>
            <person name="Pennacchio L.A."/>
            <person name="Richardson P."/>
            <person name="Stubbs L."/>
            <person name="Rokhsar D.S."/>
            <person name="Myers R.M."/>
            <person name="Rubin E.M."/>
            <person name="Lucas S.M."/>
        </authorList>
    </citation>
    <scope>NUCLEOTIDE SEQUENCE [LARGE SCALE GENOMIC DNA]</scope>
</reference>
<reference key="2">
    <citation type="submission" date="2005-07" db="EMBL/GenBank/DDBJ databases">
        <authorList>
            <person name="Mural R.J."/>
            <person name="Istrail S."/>
            <person name="Sutton G.G."/>
            <person name="Florea L."/>
            <person name="Halpern A.L."/>
            <person name="Mobarry C.M."/>
            <person name="Lippert R."/>
            <person name="Walenz B."/>
            <person name="Shatkay H."/>
            <person name="Dew I."/>
            <person name="Miller J.R."/>
            <person name="Flanigan M.J."/>
            <person name="Edwards N.J."/>
            <person name="Bolanos R."/>
            <person name="Fasulo D."/>
            <person name="Halldorsson B.V."/>
            <person name="Hannenhalli S."/>
            <person name="Turner R."/>
            <person name="Yooseph S."/>
            <person name="Lu F."/>
            <person name="Nusskern D.R."/>
            <person name="Shue B.C."/>
            <person name="Zheng X.H."/>
            <person name="Zhong F."/>
            <person name="Delcher A.L."/>
            <person name="Huson D.H."/>
            <person name="Kravitz S.A."/>
            <person name="Mouchard L."/>
            <person name="Reinert K."/>
            <person name="Remington K.A."/>
            <person name="Clark A.G."/>
            <person name="Waterman M.S."/>
            <person name="Eichler E.E."/>
            <person name="Adams M.D."/>
            <person name="Hunkapiller M.W."/>
            <person name="Myers E.W."/>
            <person name="Venter J.C."/>
        </authorList>
    </citation>
    <scope>NUCLEOTIDE SEQUENCE [LARGE SCALE GENOMIC DNA]</scope>
</reference>
<reference key="3">
    <citation type="journal article" date="2004" name="Nat. Genet.">
        <title>Complete sequencing and characterization of 21,243 full-length human cDNAs.</title>
        <authorList>
            <person name="Ota T."/>
            <person name="Suzuki Y."/>
            <person name="Nishikawa T."/>
            <person name="Otsuki T."/>
            <person name="Sugiyama T."/>
            <person name="Irie R."/>
            <person name="Wakamatsu A."/>
            <person name="Hayashi K."/>
            <person name="Sato H."/>
            <person name="Nagai K."/>
            <person name="Kimura K."/>
            <person name="Makita H."/>
            <person name="Sekine M."/>
            <person name="Obayashi M."/>
            <person name="Nishi T."/>
            <person name="Shibahara T."/>
            <person name="Tanaka T."/>
            <person name="Ishii S."/>
            <person name="Yamamoto J."/>
            <person name="Saito K."/>
            <person name="Kawai Y."/>
            <person name="Isono Y."/>
            <person name="Nakamura Y."/>
            <person name="Nagahari K."/>
            <person name="Murakami K."/>
            <person name="Yasuda T."/>
            <person name="Iwayanagi T."/>
            <person name="Wagatsuma M."/>
            <person name="Shiratori A."/>
            <person name="Sudo H."/>
            <person name="Hosoiri T."/>
            <person name="Kaku Y."/>
            <person name="Kodaira H."/>
            <person name="Kondo H."/>
            <person name="Sugawara M."/>
            <person name="Takahashi M."/>
            <person name="Kanda K."/>
            <person name="Yokoi T."/>
            <person name="Furuya T."/>
            <person name="Kikkawa E."/>
            <person name="Omura Y."/>
            <person name="Abe K."/>
            <person name="Kamihara K."/>
            <person name="Katsuta N."/>
            <person name="Sato K."/>
            <person name="Tanikawa M."/>
            <person name="Yamazaki M."/>
            <person name="Ninomiya K."/>
            <person name="Ishibashi T."/>
            <person name="Yamashita H."/>
            <person name="Murakawa K."/>
            <person name="Fujimori K."/>
            <person name="Tanai H."/>
            <person name="Kimata M."/>
            <person name="Watanabe M."/>
            <person name="Hiraoka S."/>
            <person name="Chiba Y."/>
            <person name="Ishida S."/>
            <person name="Ono Y."/>
            <person name="Takiguchi S."/>
            <person name="Watanabe S."/>
            <person name="Yosida M."/>
            <person name="Hotuta T."/>
            <person name="Kusano J."/>
            <person name="Kanehori K."/>
            <person name="Takahashi-Fujii A."/>
            <person name="Hara H."/>
            <person name="Tanase T.-O."/>
            <person name="Nomura Y."/>
            <person name="Togiya S."/>
            <person name="Komai F."/>
            <person name="Hara R."/>
            <person name="Takeuchi K."/>
            <person name="Arita M."/>
            <person name="Imose N."/>
            <person name="Musashino K."/>
            <person name="Yuuki H."/>
            <person name="Oshima A."/>
            <person name="Sasaki N."/>
            <person name="Aotsuka S."/>
            <person name="Yoshikawa Y."/>
            <person name="Matsunawa H."/>
            <person name="Ichihara T."/>
            <person name="Shiohata N."/>
            <person name="Sano S."/>
            <person name="Moriya S."/>
            <person name="Momiyama H."/>
            <person name="Satoh N."/>
            <person name="Takami S."/>
            <person name="Terashima Y."/>
            <person name="Suzuki O."/>
            <person name="Nakagawa S."/>
            <person name="Senoh A."/>
            <person name="Mizoguchi H."/>
            <person name="Goto Y."/>
            <person name="Shimizu F."/>
            <person name="Wakebe H."/>
            <person name="Hishigaki H."/>
            <person name="Watanabe T."/>
            <person name="Sugiyama A."/>
            <person name="Takemoto M."/>
            <person name="Kawakami B."/>
            <person name="Yamazaki M."/>
            <person name="Watanabe K."/>
            <person name="Kumagai A."/>
            <person name="Itakura S."/>
            <person name="Fukuzumi Y."/>
            <person name="Fujimori Y."/>
            <person name="Komiyama M."/>
            <person name="Tashiro H."/>
            <person name="Tanigami A."/>
            <person name="Fujiwara T."/>
            <person name="Ono T."/>
            <person name="Yamada K."/>
            <person name="Fujii Y."/>
            <person name="Ozaki K."/>
            <person name="Hirao M."/>
            <person name="Ohmori Y."/>
            <person name="Kawabata A."/>
            <person name="Hikiji T."/>
            <person name="Kobatake N."/>
            <person name="Inagaki H."/>
            <person name="Ikema Y."/>
            <person name="Okamoto S."/>
            <person name="Okitani R."/>
            <person name="Kawakami T."/>
            <person name="Noguchi S."/>
            <person name="Itoh T."/>
            <person name="Shigeta K."/>
            <person name="Senba T."/>
            <person name="Matsumura K."/>
            <person name="Nakajima Y."/>
            <person name="Mizuno T."/>
            <person name="Morinaga M."/>
            <person name="Sasaki M."/>
            <person name="Togashi T."/>
            <person name="Oyama M."/>
            <person name="Hata H."/>
            <person name="Watanabe M."/>
            <person name="Komatsu T."/>
            <person name="Mizushima-Sugano J."/>
            <person name="Satoh T."/>
            <person name="Shirai Y."/>
            <person name="Takahashi Y."/>
            <person name="Nakagawa K."/>
            <person name="Okumura K."/>
            <person name="Nagase T."/>
            <person name="Nomura N."/>
            <person name="Kikuchi H."/>
            <person name="Masuho Y."/>
            <person name="Yamashita R."/>
            <person name="Nakai K."/>
            <person name="Yada T."/>
            <person name="Nakamura Y."/>
            <person name="Ohara O."/>
            <person name="Isogai T."/>
            <person name="Sugano S."/>
        </authorList>
    </citation>
    <scope>NUCLEOTIDE SEQUENCE [LARGE SCALE MRNA]</scope>
    <source>
        <tissue>Colon</tissue>
        <tissue>Small intestine</tissue>
    </source>
</reference>
<reference key="4">
    <citation type="journal article" date="2004" name="Genome Res.">
        <title>The status, quality, and expansion of the NIH full-length cDNA project: the Mammalian Gene Collection (MGC).</title>
        <authorList>
            <consortium name="The MGC Project Team"/>
        </authorList>
    </citation>
    <scope>NUCLEOTIDE SEQUENCE [LARGE SCALE MRNA] OF 132-407</scope>
    <source>
        <tissue>Prostate</tissue>
    </source>
</reference>
<reference key="5">
    <citation type="journal article" date="2014" name="Nat. Struct. Mol. Biol.">
        <title>Uncovering global SUMOylation signaling networks in a site-specific manner.</title>
        <authorList>
            <person name="Hendriks I.A."/>
            <person name="D'Souza R.C."/>
            <person name="Yang B."/>
            <person name="Verlaan-de Vries M."/>
            <person name="Mann M."/>
            <person name="Vertegaal A.C."/>
        </authorList>
    </citation>
    <scope>SUMOYLATION [LARGE SCALE ANALYSIS] AT LYS-198; LYS-251 AND LYS-266</scope>
    <scope>IDENTIFICATION BY MASS SPECTROMETRY [LARGE SCALE ANALYSIS]</scope>
</reference>
<reference key="6">
    <citation type="journal article" date="2017" name="Nat. Struct. Mol. Biol.">
        <title>Site-specific mapping of the human SUMO proteome reveals co-modification with phosphorylation.</title>
        <authorList>
            <person name="Hendriks I.A."/>
            <person name="Lyon D."/>
            <person name="Young C."/>
            <person name="Jensen L.J."/>
            <person name="Vertegaal A.C."/>
            <person name="Nielsen M.L."/>
        </authorList>
    </citation>
    <scope>SUMOYLATION [LARGE SCALE ANALYSIS] AT LYS-176; LYS-198 AND LYS-308</scope>
    <scope>IDENTIFICATION BY MASS SPECTROMETRY [LARGE SCALE ANALYSIS]</scope>
</reference>
<dbReference type="EMBL" id="AC010645">
    <property type="status" value="NOT_ANNOTATED_CDS"/>
    <property type="molecule type" value="Genomic_DNA"/>
</dbReference>
<dbReference type="EMBL" id="DA345819">
    <property type="status" value="NOT_ANNOTATED_CDS"/>
    <property type="molecule type" value="mRNA"/>
</dbReference>
<dbReference type="EMBL" id="AK025256">
    <property type="protein sequence ID" value="BAB15093.1"/>
    <property type="status" value="ALT_SEQ"/>
    <property type="molecule type" value="mRNA"/>
</dbReference>
<dbReference type="EMBL" id="AK097041">
    <property type="protein sequence ID" value="BAG53411.1"/>
    <property type="molecule type" value="mRNA"/>
</dbReference>
<dbReference type="EMBL" id="CH471135">
    <property type="protein sequence ID" value="EAW72535.1"/>
    <property type="molecule type" value="Genomic_DNA"/>
</dbReference>
<dbReference type="EMBL" id="BC046237">
    <property type="protein sequence ID" value="AAH46237.1"/>
    <property type="molecule type" value="mRNA"/>
</dbReference>
<dbReference type="EMBL" id="BC062982">
    <property type="protein sequence ID" value="AAH62982.1"/>
    <property type="molecule type" value="mRNA"/>
</dbReference>
<dbReference type="EMBL" id="BC082767">
    <property type="protein sequence ID" value="AAH82767.1"/>
    <property type="molecule type" value="mRNA"/>
</dbReference>
<dbReference type="CCDS" id="CCDS12963.1"/>
<dbReference type="RefSeq" id="NP_079038.2">
    <property type="nucleotide sequence ID" value="NM_024762.3"/>
</dbReference>
<dbReference type="SMR" id="Q9H707"/>
<dbReference type="BioGRID" id="122913">
    <property type="interactions" value="42"/>
</dbReference>
<dbReference type="FunCoup" id="Q9H707">
    <property type="interactions" value="101"/>
</dbReference>
<dbReference type="IntAct" id="Q9H707">
    <property type="interactions" value="38"/>
</dbReference>
<dbReference type="STRING" id="9606.ENSP00000375582"/>
<dbReference type="GlyGen" id="Q9H707">
    <property type="glycosylation" value="1 site, 1 O-linked glycan (1 site)"/>
</dbReference>
<dbReference type="iPTMnet" id="Q9H707"/>
<dbReference type="PhosphoSitePlus" id="Q9H707"/>
<dbReference type="BioMuta" id="ZNF552"/>
<dbReference type="DMDM" id="147742907"/>
<dbReference type="jPOST" id="Q9H707"/>
<dbReference type="MassIVE" id="Q9H707"/>
<dbReference type="PaxDb" id="9606-ENSP00000375582"/>
<dbReference type="PeptideAtlas" id="Q9H707"/>
<dbReference type="ProteomicsDB" id="81071"/>
<dbReference type="Pumba" id="Q9H707"/>
<dbReference type="Antibodypedia" id="71188">
    <property type="antibodies" value="10 antibodies from 5 providers"/>
</dbReference>
<dbReference type="DNASU" id="79818"/>
<dbReference type="Ensembl" id="ENST00000391701.1">
    <property type="protein sequence ID" value="ENSP00000375582.1"/>
    <property type="gene ID" value="ENSG00000178935.5"/>
</dbReference>
<dbReference type="GeneID" id="79818"/>
<dbReference type="KEGG" id="hsa:79818"/>
<dbReference type="MANE-Select" id="ENST00000391701.1">
    <property type="protein sequence ID" value="ENSP00000375582.1"/>
    <property type="RefSeq nucleotide sequence ID" value="NM_024762.3"/>
    <property type="RefSeq protein sequence ID" value="NP_079038.2"/>
</dbReference>
<dbReference type="UCSC" id="uc002qqg.3">
    <property type="organism name" value="human"/>
</dbReference>
<dbReference type="AGR" id="HGNC:26135"/>
<dbReference type="CTD" id="79818"/>
<dbReference type="GeneCards" id="ZNF552"/>
<dbReference type="HGNC" id="HGNC:26135">
    <property type="gene designation" value="ZNF552"/>
</dbReference>
<dbReference type="HPA" id="ENSG00000178935">
    <property type="expression patterns" value="Low tissue specificity"/>
</dbReference>
<dbReference type="neXtProt" id="NX_Q9H707"/>
<dbReference type="OpenTargets" id="ENSG00000178935"/>
<dbReference type="PharmGKB" id="PA134986961"/>
<dbReference type="VEuPathDB" id="HostDB:ENSG00000178935"/>
<dbReference type="eggNOG" id="KOG1721">
    <property type="taxonomic scope" value="Eukaryota"/>
</dbReference>
<dbReference type="GeneTree" id="ENSGT00940000164660"/>
<dbReference type="HOGENOM" id="CLU_002678_0_2_1"/>
<dbReference type="InParanoid" id="Q9H707"/>
<dbReference type="OMA" id="FRGGKTH"/>
<dbReference type="OrthoDB" id="8922241at2759"/>
<dbReference type="PAN-GO" id="Q9H707">
    <property type="GO annotations" value="4 GO annotations based on evolutionary models"/>
</dbReference>
<dbReference type="PhylomeDB" id="Q9H707"/>
<dbReference type="TreeFam" id="TF341078"/>
<dbReference type="PathwayCommons" id="Q9H707"/>
<dbReference type="Reactome" id="R-HSA-212436">
    <property type="pathway name" value="Generic Transcription Pathway"/>
</dbReference>
<dbReference type="SignaLink" id="Q9H707"/>
<dbReference type="BioGRID-ORCS" id="79818">
    <property type="hits" value="22 hits in 1173 CRISPR screens"/>
</dbReference>
<dbReference type="ChiTaRS" id="ZNF552">
    <property type="organism name" value="human"/>
</dbReference>
<dbReference type="GenomeRNAi" id="79818"/>
<dbReference type="Pharos" id="Q9H707">
    <property type="development level" value="Tdark"/>
</dbReference>
<dbReference type="PRO" id="PR:Q9H707"/>
<dbReference type="Proteomes" id="UP000005640">
    <property type="component" value="Chromosome 19"/>
</dbReference>
<dbReference type="RNAct" id="Q9H707">
    <property type="molecule type" value="protein"/>
</dbReference>
<dbReference type="Bgee" id="ENSG00000178935">
    <property type="expression patterns" value="Expressed in buccal mucosa cell and 131 other cell types or tissues"/>
</dbReference>
<dbReference type="ExpressionAtlas" id="Q9H707">
    <property type="expression patterns" value="baseline and differential"/>
</dbReference>
<dbReference type="GO" id="GO:0005634">
    <property type="term" value="C:nucleus"/>
    <property type="evidence" value="ECO:0000318"/>
    <property type="project" value="GO_Central"/>
</dbReference>
<dbReference type="GO" id="GO:0000981">
    <property type="term" value="F:DNA-binding transcription factor activity, RNA polymerase II-specific"/>
    <property type="evidence" value="ECO:0000318"/>
    <property type="project" value="GO_Central"/>
</dbReference>
<dbReference type="GO" id="GO:0000978">
    <property type="term" value="F:RNA polymerase II cis-regulatory region sequence-specific DNA binding"/>
    <property type="evidence" value="ECO:0000318"/>
    <property type="project" value="GO_Central"/>
</dbReference>
<dbReference type="GO" id="GO:0008270">
    <property type="term" value="F:zinc ion binding"/>
    <property type="evidence" value="ECO:0007669"/>
    <property type="project" value="UniProtKB-KW"/>
</dbReference>
<dbReference type="GO" id="GO:0006357">
    <property type="term" value="P:regulation of transcription by RNA polymerase II"/>
    <property type="evidence" value="ECO:0000318"/>
    <property type="project" value="GO_Central"/>
</dbReference>
<dbReference type="CDD" id="cd07765">
    <property type="entry name" value="KRAB_A-box"/>
    <property type="match status" value="1"/>
</dbReference>
<dbReference type="FunFam" id="3.30.160.60:FF:000135">
    <property type="entry name" value="Zinc finger protein 358"/>
    <property type="match status" value="1"/>
</dbReference>
<dbReference type="FunFam" id="3.30.160.60:FF:002967">
    <property type="entry name" value="Zinc finger protein 417"/>
    <property type="match status" value="1"/>
</dbReference>
<dbReference type="FunFam" id="3.30.160.60:FF:001532">
    <property type="entry name" value="Zinc finger protein 483"/>
    <property type="match status" value="1"/>
</dbReference>
<dbReference type="FunFam" id="3.30.160.60:FF:002427">
    <property type="entry name" value="Zinc finger protein 552"/>
    <property type="match status" value="1"/>
</dbReference>
<dbReference type="FunFam" id="3.30.160.60:FF:000281">
    <property type="entry name" value="Zinc finger protein 558 isoform X1"/>
    <property type="match status" value="1"/>
</dbReference>
<dbReference type="FunFam" id="3.30.160.60:FF:001437">
    <property type="entry name" value="Zinc finger protein 594"/>
    <property type="match status" value="1"/>
</dbReference>
<dbReference type="Gene3D" id="6.10.140.140">
    <property type="match status" value="1"/>
</dbReference>
<dbReference type="Gene3D" id="3.30.160.60">
    <property type="entry name" value="Classic Zinc Finger"/>
    <property type="match status" value="7"/>
</dbReference>
<dbReference type="InterPro" id="IPR001909">
    <property type="entry name" value="KRAB"/>
</dbReference>
<dbReference type="InterPro" id="IPR036051">
    <property type="entry name" value="KRAB_dom_sf"/>
</dbReference>
<dbReference type="InterPro" id="IPR036236">
    <property type="entry name" value="Znf_C2H2_sf"/>
</dbReference>
<dbReference type="InterPro" id="IPR013087">
    <property type="entry name" value="Znf_C2H2_type"/>
</dbReference>
<dbReference type="PANTHER" id="PTHR24390:SF79">
    <property type="entry name" value="ASPARAGINE-RICH ZINC FINGER PROTEIN AZF1"/>
    <property type="match status" value="1"/>
</dbReference>
<dbReference type="PANTHER" id="PTHR24390">
    <property type="entry name" value="ZINC FINGER PROTEIN"/>
    <property type="match status" value="1"/>
</dbReference>
<dbReference type="Pfam" id="PF01352">
    <property type="entry name" value="KRAB"/>
    <property type="match status" value="1"/>
</dbReference>
<dbReference type="Pfam" id="PF00096">
    <property type="entry name" value="zf-C2H2"/>
    <property type="match status" value="5"/>
</dbReference>
<dbReference type="SMART" id="SM00349">
    <property type="entry name" value="KRAB"/>
    <property type="match status" value="1"/>
</dbReference>
<dbReference type="SMART" id="SM00355">
    <property type="entry name" value="ZnF_C2H2"/>
    <property type="match status" value="7"/>
</dbReference>
<dbReference type="SUPFAM" id="SSF57667">
    <property type="entry name" value="beta-beta-alpha zinc fingers"/>
    <property type="match status" value="5"/>
</dbReference>
<dbReference type="SUPFAM" id="SSF109640">
    <property type="entry name" value="KRAB domain (Kruppel-associated box)"/>
    <property type="match status" value="1"/>
</dbReference>
<dbReference type="PROSITE" id="PS50805">
    <property type="entry name" value="KRAB"/>
    <property type="match status" value="1"/>
</dbReference>
<dbReference type="PROSITE" id="PS00028">
    <property type="entry name" value="ZINC_FINGER_C2H2_1"/>
    <property type="match status" value="6"/>
</dbReference>
<dbReference type="PROSITE" id="PS50157">
    <property type="entry name" value="ZINC_FINGER_C2H2_2"/>
    <property type="match status" value="8"/>
</dbReference>
<keyword id="KW-0238">DNA-binding</keyword>
<keyword id="KW-1017">Isopeptide bond</keyword>
<keyword id="KW-0479">Metal-binding</keyword>
<keyword id="KW-0539">Nucleus</keyword>
<keyword id="KW-1267">Proteomics identification</keyword>
<keyword id="KW-1185">Reference proteome</keyword>
<keyword id="KW-0677">Repeat</keyword>
<keyword id="KW-0804">Transcription</keyword>
<keyword id="KW-0805">Transcription regulation</keyword>
<keyword id="KW-0832">Ubl conjugation</keyword>
<keyword id="KW-0862">Zinc</keyword>
<keyword id="KW-0863">Zinc-finger</keyword>
<protein>
    <recommendedName>
        <fullName>Zinc finger protein 552</fullName>
    </recommendedName>
</protein>